<protein>
    <recommendedName>
        <fullName evidence="1">3-deoxy-manno-octulosonate cytidylyltransferase</fullName>
        <ecNumber evidence="1">2.7.7.38</ecNumber>
    </recommendedName>
    <alternativeName>
        <fullName evidence="1">CMP-2-keto-3-deoxyoctulosonic acid synthase</fullName>
        <shortName evidence="1">CKS</shortName>
        <shortName evidence="1">CMP-KDO synthase</shortName>
    </alternativeName>
</protein>
<keyword id="KW-0963">Cytoplasm</keyword>
<keyword id="KW-0448">Lipopolysaccharide biosynthesis</keyword>
<keyword id="KW-0548">Nucleotidyltransferase</keyword>
<keyword id="KW-1185">Reference proteome</keyword>
<keyword id="KW-0808">Transferase</keyword>
<gene>
    <name evidence="1" type="primary">kdsB</name>
    <name type="ordered locus">DVU_3114</name>
</gene>
<reference key="1">
    <citation type="journal article" date="2004" name="Nat. Biotechnol.">
        <title>The genome sequence of the anaerobic, sulfate-reducing bacterium Desulfovibrio vulgaris Hildenborough.</title>
        <authorList>
            <person name="Heidelberg J.F."/>
            <person name="Seshadri R."/>
            <person name="Haveman S.A."/>
            <person name="Hemme C.L."/>
            <person name="Paulsen I.T."/>
            <person name="Kolonay J.F."/>
            <person name="Eisen J.A."/>
            <person name="Ward N.L."/>
            <person name="Methe B.A."/>
            <person name="Brinkac L.M."/>
            <person name="Daugherty S.C."/>
            <person name="DeBoy R.T."/>
            <person name="Dodson R.J."/>
            <person name="Durkin A.S."/>
            <person name="Madupu R."/>
            <person name="Nelson W.C."/>
            <person name="Sullivan S.A."/>
            <person name="Fouts D.E."/>
            <person name="Haft D.H."/>
            <person name="Selengut J."/>
            <person name="Peterson J.D."/>
            <person name="Davidsen T.M."/>
            <person name="Zafar N."/>
            <person name="Zhou L."/>
            <person name="Radune D."/>
            <person name="Dimitrov G."/>
            <person name="Hance M."/>
            <person name="Tran K."/>
            <person name="Khouri H.M."/>
            <person name="Gill J."/>
            <person name="Utterback T.R."/>
            <person name="Feldblyum T.V."/>
            <person name="Wall J.D."/>
            <person name="Voordouw G."/>
            <person name="Fraser C.M."/>
        </authorList>
    </citation>
    <scope>NUCLEOTIDE SEQUENCE [LARGE SCALE GENOMIC DNA]</scope>
    <source>
        <strain>ATCC 29579 / DSM 644 / CCUG 34227 / NCIMB 8303 / VKM B-1760 / Hildenborough</strain>
    </source>
</reference>
<name>KDSB_NITV2</name>
<feature type="chain" id="PRO_0000370061" description="3-deoxy-manno-octulosonate cytidylyltransferase">
    <location>
        <begin position="1"/>
        <end position="252"/>
    </location>
</feature>
<proteinExistence type="inferred from homology"/>
<sequence>MSAPRTCYGIIPARYASSRFPGKPLAEILGRPMFWHVYDRARRCAAFDEVALATDDARIADAANVLGVPCVMTAEHHPSGTDRVHEAAMRLGVPDDAVVVNIQGDEPALDPRMLDQLVAPFADASVRVATLAMALSAQEAQSPDRVKVVVAANGDALYFSRADIPFVRDGDVGGDTAGRLGHIGLYAFRMEALRRFTQLPPSRLEQTEKLEQLRLLENGIAIRVVPTTYRTHGVDRPEDIDVIINLLRENDG</sequence>
<comment type="function">
    <text evidence="1">Activates KDO (a required 8-carbon sugar) for incorporation into bacterial lipopolysaccharide in Gram-negative bacteria.</text>
</comment>
<comment type="catalytic activity">
    <reaction evidence="1">
        <text>3-deoxy-alpha-D-manno-oct-2-ulosonate + CTP = CMP-3-deoxy-beta-D-manno-octulosonate + diphosphate</text>
        <dbReference type="Rhea" id="RHEA:23448"/>
        <dbReference type="ChEBI" id="CHEBI:33019"/>
        <dbReference type="ChEBI" id="CHEBI:37563"/>
        <dbReference type="ChEBI" id="CHEBI:85986"/>
        <dbReference type="ChEBI" id="CHEBI:85987"/>
        <dbReference type="EC" id="2.7.7.38"/>
    </reaction>
</comment>
<comment type="pathway">
    <text evidence="1">Nucleotide-sugar biosynthesis; CMP-3-deoxy-D-manno-octulosonate biosynthesis; CMP-3-deoxy-D-manno-octulosonate from 3-deoxy-D-manno-octulosonate and CTP: step 1/1.</text>
</comment>
<comment type="pathway">
    <text evidence="1">Bacterial outer membrane biogenesis; lipopolysaccharide biosynthesis.</text>
</comment>
<comment type="subcellular location">
    <subcellularLocation>
        <location evidence="1">Cytoplasm</location>
    </subcellularLocation>
</comment>
<comment type="similarity">
    <text evidence="1">Belongs to the KdsB family.</text>
</comment>
<organism>
    <name type="scientific">Nitratidesulfovibrio vulgaris (strain ATCC 29579 / DSM 644 / CCUG 34227 / NCIMB 8303 / VKM B-1760 / Hildenborough)</name>
    <name type="common">Desulfovibrio vulgaris</name>
    <dbReference type="NCBI Taxonomy" id="882"/>
    <lineage>
        <taxon>Bacteria</taxon>
        <taxon>Pseudomonadati</taxon>
        <taxon>Thermodesulfobacteriota</taxon>
        <taxon>Desulfovibrionia</taxon>
        <taxon>Desulfovibrionales</taxon>
        <taxon>Desulfovibrionaceae</taxon>
        <taxon>Nitratidesulfovibrio</taxon>
    </lineage>
</organism>
<accession>Q726J3</accession>
<evidence type="ECO:0000255" key="1">
    <source>
        <dbReference type="HAMAP-Rule" id="MF_00057"/>
    </source>
</evidence>
<dbReference type="EC" id="2.7.7.38" evidence="1"/>
<dbReference type="EMBL" id="AE017285">
    <property type="protein sequence ID" value="AAS97585.1"/>
    <property type="molecule type" value="Genomic_DNA"/>
</dbReference>
<dbReference type="RefSeq" id="WP_010940373.1">
    <property type="nucleotide sequence ID" value="NC_002937.3"/>
</dbReference>
<dbReference type="RefSeq" id="YP_012325.1">
    <property type="nucleotide sequence ID" value="NC_002937.3"/>
</dbReference>
<dbReference type="SMR" id="Q726J3"/>
<dbReference type="STRING" id="882.DVU_3114"/>
<dbReference type="PaxDb" id="882-DVU_3114"/>
<dbReference type="EnsemblBacteria" id="AAS97585">
    <property type="protein sequence ID" value="AAS97585"/>
    <property type="gene ID" value="DVU_3114"/>
</dbReference>
<dbReference type="KEGG" id="dvu:DVU_3114"/>
<dbReference type="PATRIC" id="fig|882.5.peg.2825"/>
<dbReference type="eggNOG" id="COG1212">
    <property type="taxonomic scope" value="Bacteria"/>
</dbReference>
<dbReference type="HOGENOM" id="CLU_065038_0_1_7"/>
<dbReference type="OrthoDB" id="9815559at2"/>
<dbReference type="PhylomeDB" id="Q726J3"/>
<dbReference type="UniPathway" id="UPA00030"/>
<dbReference type="UniPathway" id="UPA00358">
    <property type="reaction ID" value="UER00476"/>
</dbReference>
<dbReference type="Proteomes" id="UP000002194">
    <property type="component" value="Chromosome"/>
</dbReference>
<dbReference type="GO" id="GO:0005829">
    <property type="term" value="C:cytosol"/>
    <property type="evidence" value="ECO:0007669"/>
    <property type="project" value="TreeGrafter"/>
</dbReference>
<dbReference type="GO" id="GO:0008690">
    <property type="term" value="F:3-deoxy-manno-octulosonate cytidylyltransferase activity"/>
    <property type="evidence" value="ECO:0007669"/>
    <property type="project" value="UniProtKB-UniRule"/>
</dbReference>
<dbReference type="GO" id="GO:0033468">
    <property type="term" value="P:CMP-keto-3-deoxy-D-manno-octulosonic acid biosynthetic process"/>
    <property type="evidence" value="ECO:0007669"/>
    <property type="project" value="UniProtKB-UniRule"/>
</dbReference>
<dbReference type="GO" id="GO:0009103">
    <property type="term" value="P:lipopolysaccharide biosynthetic process"/>
    <property type="evidence" value="ECO:0007669"/>
    <property type="project" value="UniProtKB-UniRule"/>
</dbReference>
<dbReference type="CDD" id="cd02517">
    <property type="entry name" value="CMP-KDO-Synthetase"/>
    <property type="match status" value="1"/>
</dbReference>
<dbReference type="FunFam" id="3.90.550.10:FF:000011">
    <property type="entry name" value="3-deoxy-manno-octulosonate cytidylyltransferase"/>
    <property type="match status" value="1"/>
</dbReference>
<dbReference type="Gene3D" id="3.90.550.10">
    <property type="entry name" value="Spore Coat Polysaccharide Biosynthesis Protein SpsA, Chain A"/>
    <property type="match status" value="1"/>
</dbReference>
<dbReference type="HAMAP" id="MF_00057">
    <property type="entry name" value="KdsB"/>
    <property type="match status" value="1"/>
</dbReference>
<dbReference type="InterPro" id="IPR003329">
    <property type="entry name" value="Cytidylyl_trans"/>
</dbReference>
<dbReference type="InterPro" id="IPR004528">
    <property type="entry name" value="KdsB"/>
</dbReference>
<dbReference type="InterPro" id="IPR029044">
    <property type="entry name" value="Nucleotide-diphossugar_trans"/>
</dbReference>
<dbReference type="NCBIfam" id="TIGR00466">
    <property type="entry name" value="kdsB"/>
    <property type="match status" value="1"/>
</dbReference>
<dbReference type="NCBIfam" id="NF003950">
    <property type="entry name" value="PRK05450.1-3"/>
    <property type="match status" value="1"/>
</dbReference>
<dbReference type="NCBIfam" id="NF003952">
    <property type="entry name" value="PRK05450.1-5"/>
    <property type="match status" value="1"/>
</dbReference>
<dbReference type="NCBIfam" id="NF009905">
    <property type="entry name" value="PRK13368.1"/>
    <property type="match status" value="1"/>
</dbReference>
<dbReference type="PANTHER" id="PTHR42866">
    <property type="entry name" value="3-DEOXY-MANNO-OCTULOSONATE CYTIDYLYLTRANSFERASE"/>
    <property type="match status" value="1"/>
</dbReference>
<dbReference type="PANTHER" id="PTHR42866:SF2">
    <property type="entry name" value="3-DEOXY-MANNO-OCTULOSONATE CYTIDYLYLTRANSFERASE, MITOCHONDRIAL"/>
    <property type="match status" value="1"/>
</dbReference>
<dbReference type="Pfam" id="PF02348">
    <property type="entry name" value="CTP_transf_3"/>
    <property type="match status" value="1"/>
</dbReference>
<dbReference type="SUPFAM" id="SSF53448">
    <property type="entry name" value="Nucleotide-diphospho-sugar transferases"/>
    <property type="match status" value="1"/>
</dbReference>